<protein>
    <recommendedName>
        <fullName>Basic phospholipase A2 pseudexin A chain</fullName>
        <shortName>svPLA2</shortName>
        <ecNumber>3.1.1.4</ecNumber>
    </recommendedName>
    <alternativeName>
        <fullName>Phosphatidylcholine 2-acylhydrolase</fullName>
    </alternativeName>
</protein>
<name>PA2BA_PSEPO</name>
<dbReference type="EC" id="3.1.1.4"/>
<dbReference type="PIR" id="A32416">
    <property type="entry name" value="A32416"/>
</dbReference>
<dbReference type="SMR" id="P20258"/>
<dbReference type="GO" id="GO:0005576">
    <property type="term" value="C:extracellular region"/>
    <property type="evidence" value="ECO:0007669"/>
    <property type="project" value="UniProtKB-SubCell"/>
</dbReference>
<dbReference type="GO" id="GO:0005509">
    <property type="term" value="F:calcium ion binding"/>
    <property type="evidence" value="ECO:0007669"/>
    <property type="project" value="InterPro"/>
</dbReference>
<dbReference type="GO" id="GO:0004623">
    <property type="term" value="F:phospholipase A2 activity"/>
    <property type="evidence" value="ECO:0007669"/>
    <property type="project" value="UniProtKB-EC"/>
</dbReference>
<dbReference type="GO" id="GO:0090729">
    <property type="term" value="F:toxin activity"/>
    <property type="evidence" value="ECO:0007669"/>
    <property type="project" value="UniProtKB-KW"/>
</dbReference>
<dbReference type="GO" id="GO:0050482">
    <property type="term" value="P:arachidonate secretion"/>
    <property type="evidence" value="ECO:0007669"/>
    <property type="project" value="InterPro"/>
</dbReference>
<dbReference type="GO" id="GO:0016042">
    <property type="term" value="P:lipid catabolic process"/>
    <property type="evidence" value="ECO:0007669"/>
    <property type="project" value="UniProtKB-KW"/>
</dbReference>
<dbReference type="GO" id="GO:0006644">
    <property type="term" value="P:phospholipid metabolic process"/>
    <property type="evidence" value="ECO:0007669"/>
    <property type="project" value="InterPro"/>
</dbReference>
<dbReference type="CDD" id="cd00125">
    <property type="entry name" value="PLA2c"/>
    <property type="match status" value="1"/>
</dbReference>
<dbReference type="FunFam" id="1.20.90.10:FF:000007">
    <property type="entry name" value="Acidic phospholipase A2"/>
    <property type="match status" value="1"/>
</dbReference>
<dbReference type="Gene3D" id="1.20.90.10">
    <property type="entry name" value="Phospholipase A2 domain"/>
    <property type="match status" value="1"/>
</dbReference>
<dbReference type="InterPro" id="IPR001211">
    <property type="entry name" value="PLipase_A2"/>
</dbReference>
<dbReference type="InterPro" id="IPR033112">
    <property type="entry name" value="PLipase_A2_Asp_AS"/>
</dbReference>
<dbReference type="InterPro" id="IPR016090">
    <property type="entry name" value="PLipase_A2_dom"/>
</dbReference>
<dbReference type="InterPro" id="IPR036444">
    <property type="entry name" value="PLipase_A2_dom_sf"/>
</dbReference>
<dbReference type="InterPro" id="IPR033113">
    <property type="entry name" value="PLipase_A2_His_AS"/>
</dbReference>
<dbReference type="PANTHER" id="PTHR11716">
    <property type="entry name" value="PHOSPHOLIPASE A2 FAMILY MEMBER"/>
    <property type="match status" value="1"/>
</dbReference>
<dbReference type="PANTHER" id="PTHR11716:SF47">
    <property type="entry name" value="PHOSPHOLIPASE A2-ALPHA"/>
    <property type="match status" value="1"/>
</dbReference>
<dbReference type="Pfam" id="PF00068">
    <property type="entry name" value="Phospholip_A2_1"/>
    <property type="match status" value="1"/>
</dbReference>
<dbReference type="PRINTS" id="PR00389">
    <property type="entry name" value="PHPHLIPASEA2"/>
</dbReference>
<dbReference type="SMART" id="SM00085">
    <property type="entry name" value="PA2c"/>
    <property type="match status" value="1"/>
</dbReference>
<dbReference type="SUPFAM" id="SSF48619">
    <property type="entry name" value="Phospholipase A2, PLA2"/>
    <property type="match status" value="1"/>
</dbReference>
<dbReference type="PROSITE" id="PS00119">
    <property type="entry name" value="PA2_ASP"/>
    <property type="match status" value="1"/>
</dbReference>
<dbReference type="PROSITE" id="PS00118">
    <property type="entry name" value="PA2_HIS"/>
    <property type="match status" value="1"/>
</dbReference>
<proteinExistence type="evidence at protein level"/>
<evidence type="ECO:0000250" key="1"/>
<evidence type="ECO:0000255" key="2">
    <source>
        <dbReference type="PROSITE-ProRule" id="PRU10035"/>
    </source>
</evidence>
<evidence type="ECO:0000255" key="3">
    <source>
        <dbReference type="PROSITE-ProRule" id="PRU10036"/>
    </source>
</evidence>
<evidence type="ECO:0000269" key="4">
    <source>
    </source>
</evidence>
<evidence type="ECO:0000305" key="5"/>
<organism>
    <name type="scientific">Pseudechis porphyriacus</name>
    <name type="common">Red-bellied black snake</name>
    <dbReference type="NCBI Taxonomy" id="8671"/>
    <lineage>
        <taxon>Eukaryota</taxon>
        <taxon>Metazoa</taxon>
        <taxon>Chordata</taxon>
        <taxon>Craniata</taxon>
        <taxon>Vertebrata</taxon>
        <taxon>Euteleostomi</taxon>
        <taxon>Lepidosauria</taxon>
        <taxon>Squamata</taxon>
        <taxon>Bifurcata</taxon>
        <taxon>Unidentata</taxon>
        <taxon>Episquamata</taxon>
        <taxon>Toxicofera</taxon>
        <taxon>Serpentes</taxon>
        <taxon>Colubroidea</taxon>
        <taxon>Elapidae</taxon>
        <taxon>Hydrophiinae</taxon>
        <taxon>Pseudechis</taxon>
    </lineage>
</organism>
<sequence>NLYQFKNMIQCANKGSRSWLDYVNYGCYCGWGGSGTPVDELDRCCQTHDNCYDQAGKKGCFPKLTLYSWKCTGNVPTCNSKSGCKDFVCACDAEAAKCFAKAPYKKENFKIDTKTRC</sequence>
<accession>P20258</accession>
<keyword id="KW-0106">Calcium</keyword>
<keyword id="KW-0903">Direct protein sequencing</keyword>
<keyword id="KW-1015">Disulfide bond</keyword>
<keyword id="KW-0378">Hydrolase</keyword>
<keyword id="KW-0442">Lipid degradation</keyword>
<keyword id="KW-0443">Lipid metabolism</keyword>
<keyword id="KW-0479">Metal-binding</keyword>
<keyword id="KW-0964">Secreted</keyword>
<keyword id="KW-0800">Toxin</keyword>
<comment type="function">
    <text>PLA2 catalyzes the calcium-dependent hydrolysis of the 2-acyl groups in 3-sn-phosphoglycerides.</text>
</comment>
<comment type="catalytic activity">
    <reaction evidence="2 3 4">
        <text>a 1,2-diacyl-sn-glycero-3-phosphocholine + H2O = a 1-acyl-sn-glycero-3-phosphocholine + a fatty acid + H(+)</text>
        <dbReference type="Rhea" id="RHEA:15801"/>
        <dbReference type="ChEBI" id="CHEBI:15377"/>
        <dbReference type="ChEBI" id="CHEBI:15378"/>
        <dbReference type="ChEBI" id="CHEBI:28868"/>
        <dbReference type="ChEBI" id="CHEBI:57643"/>
        <dbReference type="ChEBI" id="CHEBI:58168"/>
        <dbReference type="EC" id="3.1.1.4"/>
    </reaction>
</comment>
<comment type="cofactor">
    <cofactor evidence="1">
        <name>Ca(2+)</name>
        <dbReference type="ChEBI" id="CHEBI:29108"/>
    </cofactor>
    <text evidence="1">Binds 1 Ca(2+) ion.</text>
</comment>
<comment type="subcellular location">
    <subcellularLocation>
        <location>Secreted</location>
    </subcellularLocation>
</comment>
<comment type="tissue specificity">
    <text>Expressed by the venom gland.</text>
</comment>
<comment type="toxic dose">
    <text evidence="4">LD(50) is 1.3 mg/kg intraperitoneal injection into mice.</text>
</comment>
<comment type="similarity">
    <text evidence="5">Belongs to the phospholipase A2 family. Group I subfamily. D49 sub-subfamily.</text>
</comment>
<feature type="chain" id="PRO_0000161691" description="Basic phospholipase A2 pseudexin A chain">
    <location>
        <begin position="1"/>
        <end position="117"/>
    </location>
</feature>
<feature type="active site" evidence="1">
    <location>
        <position position="48"/>
    </location>
</feature>
<feature type="active site" evidence="1">
    <location>
        <position position="92"/>
    </location>
</feature>
<feature type="binding site" evidence="1">
    <location>
        <position position="28"/>
    </location>
    <ligand>
        <name>Ca(2+)</name>
        <dbReference type="ChEBI" id="CHEBI:29108"/>
    </ligand>
</feature>
<feature type="binding site" evidence="1">
    <location>
        <position position="30"/>
    </location>
    <ligand>
        <name>Ca(2+)</name>
        <dbReference type="ChEBI" id="CHEBI:29108"/>
    </ligand>
</feature>
<feature type="binding site" evidence="1">
    <location>
        <position position="32"/>
    </location>
    <ligand>
        <name>Ca(2+)</name>
        <dbReference type="ChEBI" id="CHEBI:29108"/>
    </ligand>
</feature>
<feature type="binding site" evidence="1">
    <location>
        <position position="49"/>
    </location>
    <ligand>
        <name>Ca(2+)</name>
        <dbReference type="ChEBI" id="CHEBI:29108"/>
    </ligand>
</feature>
<feature type="disulfide bond" evidence="1">
    <location>
        <begin position="11"/>
        <end position="71"/>
    </location>
</feature>
<feature type="disulfide bond" evidence="1">
    <location>
        <begin position="27"/>
        <end position="117"/>
    </location>
</feature>
<feature type="disulfide bond" evidence="1">
    <location>
        <begin position="29"/>
        <end position="45"/>
    </location>
</feature>
<feature type="disulfide bond" evidence="1">
    <location>
        <begin position="44"/>
        <end position="98"/>
    </location>
</feature>
<feature type="disulfide bond" evidence="1">
    <location>
        <begin position="51"/>
        <end position="91"/>
    </location>
</feature>
<feature type="disulfide bond" evidence="1">
    <location>
        <begin position="60"/>
        <end position="84"/>
    </location>
</feature>
<feature type="disulfide bond" evidence="1">
    <location>
        <begin position="78"/>
        <end position="89"/>
    </location>
</feature>
<reference key="1">
    <citation type="journal article" date="1989" name="Toxicon">
        <title>Purification, sequencing and characterization of pseudexin phospholipases A2 from Pseudechis porphyriacus (Australian red-bellied black snake).</title>
        <authorList>
            <person name="Schmidt J.J."/>
            <person name="Middlebrook J.L."/>
        </authorList>
    </citation>
    <scope>PROTEIN SEQUENCE</scope>
    <scope>CATALYTIC ACTIVITY</scope>
    <scope>TOXIC DOSE</scope>
    <source>
        <tissue>Venom</tissue>
    </source>
</reference>